<dbReference type="EC" id="2.3.1.51"/>
<dbReference type="EMBL" id="AE001439">
    <property type="protein sequence ID" value="AAD06852.1"/>
    <property type="molecule type" value="Genomic_DNA"/>
</dbReference>
<dbReference type="PIR" id="B71827">
    <property type="entry name" value="B71827"/>
</dbReference>
<dbReference type="RefSeq" id="WP_000841245.1">
    <property type="nucleotide sequence ID" value="NZ_CP011330.1"/>
</dbReference>
<dbReference type="SMR" id="Q9ZJN8"/>
<dbReference type="KEGG" id="hpj:jhp_1267"/>
<dbReference type="PATRIC" id="fig|85963.30.peg.1304"/>
<dbReference type="eggNOG" id="COG0204">
    <property type="taxonomic scope" value="Bacteria"/>
</dbReference>
<dbReference type="UniPathway" id="UPA00557">
    <property type="reaction ID" value="UER00613"/>
</dbReference>
<dbReference type="Proteomes" id="UP000000804">
    <property type="component" value="Chromosome"/>
</dbReference>
<dbReference type="GO" id="GO:0005886">
    <property type="term" value="C:plasma membrane"/>
    <property type="evidence" value="ECO:0007669"/>
    <property type="project" value="UniProtKB-SubCell"/>
</dbReference>
<dbReference type="GO" id="GO:0003841">
    <property type="term" value="F:1-acylglycerol-3-phosphate O-acyltransferase activity"/>
    <property type="evidence" value="ECO:0007669"/>
    <property type="project" value="UniProtKB-EC"/>
</dbReference>
<dbReference type="GO" id="GO:0016024">
    <property type="term" value="P:CDP-diacylglycerol biosynthetic process"/>
    <property type="evidence" value="ECO:0007669"/>
    <property type="project" value="UniProtKB-UniPathway"/>
</dbReference>
<dbReference type="GO" id="GO:0006654">
    <property type="term" value="P:phosphatidic acid biosynthetic process"/>
    <property type="evidence" value="ECO:0007669"/>
    <property type="project" value="TreeGrafter"/>
</dbReference>
<dbReference type="CDD" id="cd07989">
    <property type="entry name" value="LPLAT_AGPAT-like"/>
    <property type="match status" value="1"/>
</dbReference>
<dbReference type="InterPro" id="IPR004552">
    <property type="entry name" value="AGP_acyltrans"/>
</dbReference>
<dbReference type="InterPro" id="IPR002123">
    <property type="entry name" value="Plipid/glycerol_acylTrfase"/>
</dbReference>
<dbReference type="NCBIfam" id="TIGR00530">
    <property type="entry name" value="AGP_acyltrn"/>
    <property type="match status" value="1"/>
</dbReference>
<dbReference type="PANTHER" id="PTHR10434">
    <property type="entry name" value="1-ACYL-SN-GLYCEROL-3-PHOSPHATE ACYLTRANSFERASE"/>
    <property type="match status" value="1"/>
</dbReference>
<dbReference type="PANTHER" id="PTHR10434:SF59">
    <property type="entry name" value="1-ACYL-SN-GLYCEROL-3-PHOSPHATE ACYLTRANSFERASE"/>
    <property type="match status" value="1"/>
</dbReference>
<dbReference type="Pfam" id="PF01553">
    <property type="entry name" value="Acyltransferase"/>
    <property type="match status" value="1"/>
</dbReference>
<dbReference type="SMART" id="SM00563">
    <property type="entry name" value="PlsC"/>
    <property type="match status" value="1"/>
</dbReference>
<dbReference type="SUPFAM" id="SSF69593">
    <property type="entry name" value="Glycerol-3-phosphate (1)-acyltransferase"/>
    <property type="match status" value="1"/>
</dbReference>
<sequence length="237" mass="27188">MKSNKKSNHLRAIYRALVIAIGLAVIIVFNYFNRKNNNARSSRRACSCFFSLTGVNLEKIGSFDTGAKLIVLNHQSLLDIIYLEAYHPSNICWIAKKELGEIPFYGHALTDTGMILIDREDKKGIVSLLKACKEKLDQNRPLVIFPEGTRGKGGEKFLPFKQGAKIIAEKFQLKIQPMVLINSIKIFNSKPLEAYKARTRLVMLESYTPDFSSPTWYEELQERMQKEYLKHYHELNA</sequence>
<reference key="1">
    <citation type="journal article" date="1999" name="Nature">
        <title>Genomic sequence comparison of two unrelated isolates of the human gastric pathogen Helicobacter pylori.</title>
        <authorList>
            <person name="Alm R.A."/>
            <person name="Ling L.-S.L."/>
            <person name="Moir D.T."/>
            <person name="King B.L."/>
            <person name="Brown E.D."/>
            <person name="Doig P.C."/>
            <person name="Smith D.R."/>
            <person name="Noonan B."/>
            <person name="Guild B.C."/>
            <person name="deJonge B.L."/>
            <person name="Carmel G."/>
            <person name="Tummino P.J."/>
            <person name="Caruso A."/>
            <person name="Uria-Nickelsen M."/>
            <person name="Mills D.M."/>
            <person name="Ives C."/>
            <person name="Gibson R."/>
            <person name="Merberg D."/>
            <person name="Mills S.D."/>
            <person name="Jiang Q."/>
            <person name="Taylor D.E."/>
            <person name="Vovis G.F."/>
            <person name="Trust T.J."/>
        </authorList>
    </citation>
    <scope>NUCLEOTIDE SEQUENCE [LARGE SCALE GENOMIC DNA]</scope>
    <source>
        <strain>J99 / ATCC 700824</strain>
    </source>
</reference>
<protein>
    <recommendedName>
        <fullName>1-acyl-sn-glycerol-3-phosphate acyltransferase</fullName>
        <shortName>1-AGP acyltransferase</shortName>
        <shortName>1-AGPAT</shortName>
        <ecNumber>2.3.1.51</ecNumber>
    </recommendedName>
    <alternativeName>
        <fullName>Lysophosphatidic acid acyltransferase</fullName>
        <shortName>LPAAT</shortName>
    </alternativeName>
</protein>
<keyword id="KW-0012">Acyltransferase</keyword>
<keyword id="KW-0997">Cell inner membrane</keyword>
<keyword id="KW-1003">Cell membrane</keyword>
<keyword id="KW-0444">Lipid biosynthesis</keyword>
<keyword id="KW-0443">Lipid metabolism</keyword>
<keyword id="KW-0472">Membrane</keyword>
<keyword id="KW-0594">Phospholipid biosynthesis</keyword>
<keyword id="KW-1208">Phospholipid metabolism</keyword>
<keyword id="KW-0808">Transferase</keyword>
<organism>
    <name type="scientific">Helicobacter pylori (strain J99 / ATCC 700824)</name>
    <name type="common">Campylobacter pylori J99</name>
    <dbReference type="NCBI Taxonomy" id="85963"/>
    <lineage>
        <taxon>Bacteria</taxon>
        <taxon>Pseudomonadati</taxon>
        <taxon>Campylobacterota</taxon>
        <taxon>Epsilonproteobacteria</taxon>
        <taxon>Campylobacterales</taxon>
        <taxon>Helicobacteraceae</taxon>
        <taxon>Helicobacter</taxon>
    </lineage>
</organism>
<name>PLSC_HELPJ</name>
<accession>Q9ZJN8</accession>
<gene>
    <name type="primary">plsC</name>
    <name type="ordered locus">jhp_1267</name>
</gene>
<proteinExistence type="inferred from homology"/>
<feature type="chain" id="PRO_0000208171" description="1-acyl-sn-glycerol-3-phosphate acyltransferase">
    <location>
        <begin position="1"/>
        <end position="237"/>
    </location>
</feature>
<feature type="short sequence motif" description="HXXXXD motif">
    <location>
        <begin position="74"/>
        <end position="79"/>
    </location>
</feature>
<comment type="function">
    <text>Converts lysophosphatidic acid (LPA) into phosphatidic acid by incorporating acyl moiety at the 2 position.</text>
</comment>
<comment type="catalytic activity">
    <reaction>
        <text>a 1-acyl-sn-glycero-3-phosphate + an acyl-CoA = a 1,2-diacyl-sn-glycero-3-phosphate + CoA</text>
        <dbReference type="Rhea" id="RHEA:19709"/>
        <dbReference type="ChEBI" id="CHEBI:57287"/>
        <dbReference type="ChEBI" id="CHEBI:57970"/>
        <dbReference type="ChEBI" id="CHEBI:58342"/>
        <dbReference type="ChEBI" id="CHEBI:58608"/>
        <dbReference type="EC" id="2.3.1.51"/>
    </reaction>
</comment>
<comment type="pathway">
    <text>Phospholipid metabolism; CDP-diacylglycerol biosynthesis; CDP-diacylglycerol from sn-glycerol 3-phosphate: step 2/3.</text>
</comment>
<comment type="subcellular location">
    <subcellularLocation>
        <location evidence="2">Cell inner membrane</location>
        <topology evidence="2">Peripheral membrane protein</topology>
    </subcellularLocation>
</comment>
<comment type="domain">
    <text evidence="1">The HXXXXD motif is essential for acyltransferase activity and may constitute the binding site for the phosphate moiety of the glycerol-3-phosphate.</text>
</comment>
<comment type="similarity">
    <text evidence="2">Belongs to the 1-acyl-sn-glycerol-3-phosphate acyltransferase family.</text>
</comment>
<evidence type="ECO:0000250" key="1"/>
<evidence type="ECO:0000305" key="2"/>